<proteinExistence type="inferred from homology"/>
<reference key="1">
    <citation type="journal article" date="2009" name="Genome Res.">
        <title>Comparative genomics of protoploid Saccharomycetaceae.</title>
        <authorList>
            <consortium name="The Genolevures Consortium"/>
            <person name="Souciet J.-L."/>
            <person name="Dujon B."/>
            <person name="Gaillardin C."/>
            <person name="Johnston M."/>
            <person name="Baret P.V."/>
            <person name="Cliften P."/>
            <person name="Sherman D.J."/>
            <person name="Weissenbach J."/>
            <person name="Westhof E."/>
            <person name="Wincker P."/>
            <person name="Jubin C."/>
            <person name="Poulain J."/>
            <person name="Barbe V."/>
            <person name="Segurens B."/>
            <person name="Artiguenave F."/>
            <person name="Anthouard V."/>
            <person name="Vacherie B."/>
            <person name="Val M.-E."/>
            <person name="Fulton R.S."/>
            <person name="Minx P."/>
            <person name="Wilson R."/>
            <person name="Durrens P."/>
            <person name="Jean G."/>
            <person name="Marck C."/>
            <person name="Martin T."/>
            <person name="Nikolski M."/>
            <person name="Rolland T."/>
            <person name="Seret M.-L."/>
            <person name="Casaregola S."/>
            <person name="Despons L."/>
            <person name="Fairhead C."/>
            <person name="Fischer G."/>
            <person name="Lafontaine I."/>
            <person name="Leh V."/>
            <person name="Lemaire M."/>
            <person name="de Montigny J."/>
            <person name="Neuveglise C."/>
            <person name="Thierry A."/>
            <person name="Blanc-Lenfle I."/>
            <person name="Bleykasten C."/>
            <person name="Diffels J."/>
            <person name="Fritsch E."/>
            <person name="Frangeul L."/>
            <person name="Goeffon A."/>
            <person name="Jauniaux N."/>
            <person name="Kachouri-Lafond R."/>
            <person name="Payen C."/>
            <person name="Potier S."/>
            <person name="Pribylova L."/>
            <person name="Ozanne C."/>
            <person name="Richard G.-F."/>
            <person name="Sacerdot C."/>
            <person name="Straub M.-L."/>
            <person name="Talla E."/>
        </authorList>
    </citation>
    <scope>NUCLEOTIDE SEQUENCE [LARGE SCALE GENOMIC DNA]</scope>
    <source>
        <strain>ATCC 2623 / CBS 732 / BCRC 21506 / NBRC 1130 / NCYC 568 / NRRL Y-229</strain>
    </source>
</reference>
<name>TDA11_ZYGRC</name>
<accession>C5DRG2</accession>
<feature type="chain" id="PRO_0000410770" description="Topoisomerase I damage affected protein 11">
    <location>
        <begin position="1"/>
        <end position="422"/>
    </location>
</feature>
<feature type="region of interest" description="Disordered" evidence="3">
    <location>
        <begin position="15"/>
        <end position="148"/>
    </location>
</feature>
<feature type="region of interest" description="Disordered" evidence="3">
    <location>
        <begin position="203"/>
        <end position="255"/>
    </location>
</feature>
<feature type="region of interest" description="Disordered" evidence="3">
    <location>
        <begin position="309"/>
        <end position="368"/>
    </location>
</feature>
<feature type="region of interest" description="Disordered" evidence="3">
    <location>
        <begin position="382"/>
        <end position="422"/>
    </location>
</feature>
<feature type="coiled-coil region" evidence="2">
    <location>
        <begin position="155"/>
        <end position="208"/>
    </location>
</feature>
<feature type="compositionally biased region" description="Low complexity" evidence="3">
    <location>
        <begin position="29"/>
        <end position="45"/>
    </location>
</feature>
<feature type="compositionally biased region" description="Basic and acidic residues" evidence="3">
    <location>
        <begin position="65"/>
        <end position="75"/>
    </location>
</feature>
<feature type="compositionally biased region" description="Basic residues" evidence="3">
    <location>
        <begin position="85"/>
        <end position="97"/>
    </location>
</feature>
<feature type="compositionally biased region" description="Polar residues" evidence="3">
    <location>
        <begin position="114"/>
        <end position="130"/>
    </location>
</feature>
<feature type="compositionally biased region" description="Low complexity" evidence="3">
    <location>
        <begin position="131"/>
        <end position="148"/>
    </location>
</feature>
<feature type="compositionally biased region" description="Low complexity" evidence="3">
    <location>
        <begin position="210"/>
        <end position="226"/>
    </location>
</feature>
<feature type="compositionally biased region" description="Basic and acidic residues" evidence="3">
    <location>
        <begin position="233"/>
        <end position="243"/>
    </location>
</feature>
<feature type="compositionally biased region" description="Low complexity" evidence="3">
    <location>
        <begin position="314"/>
        <end position="341"/>
    </location>
</feature>
<feature type="compositionally biased region" description="Low complexity" evidence="3">
    <location>
        <begin position="348"/>
        <end position="366"/>
    </location>
</feature>
<feature type="compositionally biased region" description="Basic and acidic residues" evidence="3">
    <location>
        <begin position="400"/>
        <end position="422"/>
    </location>
</feature>
<organism>
    <name type="scientific">Zygosaccharomyces rouxii (strain ATCC 2623 / CBS 732 / NBRC 1130 / NCYC 568 / NRRL Y-229)</name>
    <dbReference type="NCBI Taxonomy" id="559307"/>
    <lineage>
        <taxon>Eukaryota</taxon>
        <taxon>Fungi</taxon>
        <taxon>Dikarya</taxon>
        <taxon>Ascomycota</taxon>
        <taxon>Saccharomycotina</taxon>
        <taxon>Saccharomycetes</taxon>
        <taxon>Saccharomycetales</taxon>
        <taxon>Saccharomycetaceae</taxon>
        <taxon>Zygosaccharomyces</taxon>
    </lineage>
</organism>
<comment type="subcellular location">
    <subcellularLocation>
        <location evidence="1">Cytoplasm</location>
    </subcellularLocation>
</comment>
<comment type="similarity">
    <text evidence="4">Belongs to the TDA11 family.</text>
</comment>
<dbReference type="EMBL" id="CU928174">
    <property type="protein sequence ID" value="CAR26373.1"/>
    <property type="molecule type" value="Genomic_DNA"/>
</dbReference>
<dbReference type="RefSeq" id="XP_002495306.1">
    <property type="nucleotide sequence ID" value="XM_002495261.1"/>
</dbReference>
<dbReference type="SMR" id="C5DRG2"/>
<dbReference type="FunCoup" id="C5DRG2">
    <property type="interactions" value="20"/>
</dbReference>
<dbReference type="GeneID" id="8202458"/>
<dbReference type="KEGG" id="zro:ZYRO0B08206g"/>
<dbReference type="HOGENOM" id="CLU_046807_0_0_1"/>
<dbReference type="InParanoid" id="C5DRG2"/>
<dbReference type="Proteomes" id="UP000008536">
    <property type="component" value="Chromosome B"/>
</dbReference>
<dbReference type="GO" id="GO:0005737">
    <property type="term" value="C:cytoplasm"/>
    <property type="evidence" value="ECO:0007669"/>
    <property type="project" value="UniProtKB-SubCell"/>
</dbReference>
<dbReference type="InterPro" id="IPR031388">
    <property type="entry name" value="Tda11"/>
</dbReference>
<dbReference type="Pfam" id="PF17084">
    <property type="entry name" value="TDA11"/>
    <property type="match status" value="1"/>
</dbReference>
<sequence>MNKFDEFVEATDKELHVDTSTRNTTINVSSPGSSNDSTSSPKSPSGEVLSRKEMKMKQFTPKKLNYQDHPLKDHSTGGSLPITRRTSRSSTIHKRKSLLQPIVAPQTPDKSGPSWRSNGGSPSGSFNRQRSTSGASMHSRSSSQSLSLDSTFDVSLQNLANKELELLESKRRIEELKKQLQLEEQSYQKRVEELKELKSQVSNDLQINSQHQQQQQQQQQQQQQHHLQPHSKKREEHTRDKSRGKGSGTGSSSVWSKPLAFFNQFDQIIQHELERSLRWDDTPEDKIMQPEPYEGAAAVQNSQLRQPQVEIPTSNSQSNVNNTDNNDNKINNNTNNTSNNKNGHDDNNNNNDSSNNNNNNDGNNKNLWSFFNDVKTGLLGIEEEEETPQRTIAGSAKNDNGIKEFKTAKKTRDPVEMTDFQK</sequence>
<evidence type="ECO:0000250" key="1"/>
<evidence type="ECO:0000255" key="2"/>
<evidence type="ECO:0000256" key="3">
    <source>
        <dbReference type="SAM" id="MobiDB-lite"/>
    </source>
</evidence>
<evidence type="ECO:0000305" key="4"/>
<keyword id="KW-0175">Coiled coil</keyword>
<keyword id="KW-0963">Cytoplasm</keyword>
<keyword id="KW-1185">Reference proteome</keyword>
<protein>
    <recommendedName>
        <fullName>Topoisomerase I damage affected protein 11</fullName>
    </recommendedName>
</protein>
<gene>
    <name type="primary">TDA11</name>
    <name type="ordered locus">ZYRO0B08206g</name>
</gene>